<evidence type="ECO:0000255" key="1">
    <source>
        <dbReference type="HAMAP-Rule" id="MF_00183"/>
    </source>
</evidence>
<organism>
    <name type="scientific">Chlorobaculum tepidum (strain ATCC 49652 / DSM 12025 / NBRC 103806 / TLS)</name>
    <name type="common">Chlorobium tepidum</name>
    <dbReference type="NCBI Taxonomy" id="194439"/>
    <lineage>
        <taxon>Bacteria</taxon>
        <taxon>Pseudomonadati</taxon>
        <taxon>Chlorobiota</taxon>
        <taxon>Chlorobiia</taxon>
        <taxon>Chlorobiales</taxon>
        <taxon>Chlorobiaceae</taxon>
        <taxon>Chlorobaculum</taxon>
    </lineage>
</organism>
<protein>
    <recommendedName>
        <fullName evidence="1">1-deoxy-D-xylulose 5-phosphate reductoisomerase</fullName>
        <shortName evidence="1">DXP reductoisomerase</shortName>
        <ecNumber evidence="1">1.1.1.267</ecNumber>
    </recommendedName>
    <alternativeName>
        <fullName evidence="1">1-deoxyxylulose-5-phosphate reductoisomerase</fullName>
    </alternativeName>
    <alternativeName>
        <fullName evidence="1">2-C-methyl-D-erythritol 4-phosphate synthase</fullName>
    </alternativeName>
</protein>
<proteinExistence type="inferred from homology"/>
<reference key="1">
    <citation type="journal article" date="2002" name="Proc. Natl. Acad. Sci. U.S.A.">
        <title>The complete genome sequence of Chlorobium tepidum TLS, a photosynthetic, anaerobic, green-sulfur bacterium.</title>
        <authorList>
            <person name="Eisen J.A."/>
            <person name="Nelson K.E."/>
            <person name="Paulsen I.T."/>
            <person name="Heidelberg J.F."/>
            <person name="Wu M."/>
            <person name="Dodson R.J."/>
            <person name="DeBoy R.T."/>
            <person name="Gwinn M.L."/>
            <person name="Nelson W.C."/>
            <person name="Haft D.H."/>
            <person name="Hickey E.K."/>
            <person name="Peterson J.D."/>
            <person name="Durkin A.S."/>
            <person name="Kolonay J.F."/>
            <person name="Yang F."/>
            <person name="Holt I.E."/>
            <person name="Umayam L.A."/>
            <person name="Mason T.M."/>
            <person name="Brenner M."/>
            <person name="Shea T.P."/>
            <person name="Parksey D.S."/>
            <person name="Nierman W.C."/>
            <person name="Feldblyum T.V."/>
            <person name="Hansen C.L."/>
            <person name="Craven M.B."/>
            <person name="Radune D."/>
            <person name="Vamathevan J.J."/>
            <person name="Khouri H.M."/>
            <person name="White O."/>
            <person name="Gruber T.M."/>
            <person name="Ketchum K.A."/>
            <person name="Venter J.C."/>
            <person name="Tettelin H."/>
            <person name="Bryant D.A."/>
            <person name="Fraser C.M."/>
        </authorList>
    </citation>
    <scope>NUCLEOTIDE SEQUENCE [LARGE SCALE GENOMIC DNA]</scope>
    <source>
        <strain>ATCC 49652 / DSM 12025 / NBRC 103806 / TLS</strain>
    </source>
</reference>
<dbReference type="EC" id="1.1.1.267" evidence="1"/>
<dbReference type="EMBL" id="AE006470">
    <property type="protein sequence ID" value="AAM71373.1"/>
    <property type="molecule type" value="Genomic_DNA"/>
</dbReference>
<dbReference type="RefSeq" id="NP_661031.1">
    <property type="nucleotide sequence ID" value="NC_002932.3"/>
</dbReference>
<dbReference type="RefSeq" id="WP_010931819.1">
    <property type="nucleotide sequence ID" value="NC_002932.3"/>
</dbReference>
<dbReference type="SMR" id="Q8KG43"/>
<dbReference type="STRING" id="194439.CT0125"/>
<dbReference type="EnsemblBacteria" id="AAM71373">
    <property type="protein sequence ID" value="AAM71373"/>
    <property type="gene ID" value="CT0125"/>
</dbReference>
<dbReference type="KEGG" id="cte:CT0125"/>
<dbReference type="PATRIC" id="fig|194439.7.peg.123"/>
<dbReference type="eggNOG" id="COG0743">
    <property type="taxonomic scope" value="Bacteria"/>
</dbReference>
<dbReference type="HOGENOM" id="CLU_035714_4_0_10"/>
<dbReference type="OrthoDB" id="9806546at2"/>
<dbReference type="UniPathway" id="UPA00056">
    <property type="reaction ID" value="UER00092"/>
</dbReference>
<dbReference type="Proteomes" id="UP000001007">
    <property type="component" value="Chromosome"/>
</dbReference>
<dbReference type="GO" id="GO:0030604">
    <property type="term" value="F:1-deoxy-D-xylulose-5-phosphate reductoisomerase activity"/>
    <property type="evidence" value="ECO:0007669"/>
    <property type="project" value="UniProtKB-UniRule"/>
</dbReference>
<dbReference type="GO" id="GO:0030145">
    <property type="term" value="F:manganese ion binding"/>
    <property type="evidence" value="ECO:0007669"/>
    <property type="project" value="TreeGrafter"/>
</dbReference>
<dbReference type="GO" id="GO:0070402">
    <property type="term" value="F:NADPH binding"/>
    <property type="evidence" value="ECO:0007669"/>
    <property type="project" value="InterPro"/>
</dbReference>
<dbReference type="GO" id="GO:0051484">
    <property type="term" value="P:isopentenyl diphosphate biosynthetic process, methylerythritol 4-phosphate pathway involved in terpenoid biosynthetic process"/>
    <property type="evidence" value="ECO:0007669"/>
    <property type="project" value="TreeGrafter"/>
</dbReference>
<dbReference type="FunFam" id="1.10.1740.10:FF:000004">
    <property type="entry name" value="1-deoxy-D-xylulose 5-phosphate reductoisomerase"/>
    <property type="match status" value="1"/>
</dbReference>
<dbReference type="FunFam" id="3.40.50.720:FF:000045">
    <property type="entry name" value="1-deoxy-D-xylulose 5-phosphate reductoisomerase"/>
    <property type="match status" value="1"/>
</dbReference>
<dbReference type="Gene3D" id="1.10.1740.10">
    <property type="match status" value="1"/>
</dbReference>
<dbReference type="Gene3D" id="3.40.50.720">
    <property type="entry name" value="NAD(P)-binding Rossmann-like Domain"/>
    <property type="match status" value="1"/>
</dbReference>
<dbReference type="HAMAP" id="MF_00183">
    <property type="entry name" value="DXP_reductoisom"/>
    <property type="match status" value="1"/>
</dbReference>
<dbReference type="InterPro" id="IPR003821">
    <property type="entry name" value="DXP_reductoisomerase"/>
</dbReference>
<dbReference type="InterPro" id="IPR013644">
    <property type="entry name" value="DXP_reductoisomerase_C"/>
</dbReference>
<dbReference type="InterPro" id="IPR013512">
    <property type="entry name" value="DXP_reductoisomerase_N"/>
</dbReference>
<dbReference type="InterPro" id="IPR026877">
    <property type="entry name" value="DXPR_C"/>
</dbReference>
<dbReference type="InterPro" id="IPR036169">
    <property type="entry name" value="DXPR_C_sf"/>
</dbReference>
<dbReference type="InterPro" id="IPR036291">
    <property type="entry name" value="NAD(P)-bd_dom_sf"/>
</dbReference>
<dbReference type="NCBIfam" id="TIGR00243">
    <property type="entry name" value="Dxr"/>
    <property type="match status" value="1"/>
</dbReference>
<dbReference type="NCBIfam" id="NF009114">
    <property type="entry name" value="PRK12464.1"/>
    <property type="match status" value="1"/>
</dbReference>
<dbReference type="PANTHER" id="PTHR30525">
    <property type="entry name" value="1-DEOXY-D-XYLULOSE 5-PHOSPHATE REDUCTOISOMERASE"/>
    <property type="match status" value="1"/>
</dbReference>
<dbReference type="PANTHER" id="PTHR30525:SF0">
    <property type="entry name" value="1-DEOXY-D-XYLULOSE 5-PHOSPHATE REDUCTOISOMERASE, CHLOROPLASTIC"/>
    <property type="match status" value="1"/>
</dbReference>
<dbReference type="Pfam" id="PF08436">
    <property type="entry name" value="DXP_redisom_C"/>
    <property type="match status" value="1"/>
</dbReference>
<dbReference type="Pfam" id="PF02670">
    <property type="entry name" value="DXP_reductoisom"/>
    <property type="match status" value="1"/>
</dbReference>
<dbReference type="Pfam" id="PF13288">
    <property type="entry name" value="DXPR_C"/>
    <property type="match status" value="1"/>
</dbReference>
<dbReference type="PIRSF" id="PIRSF006205">
    <property type="entry name" value="Dxp_reductismrs"/>
    <property type="match status" value="1"/>
</dbReference>
<dbReference type="SUPFAM" id="SSF69055">
    <property type="entry name" value="1-deoxy-D-xylulose-5-phosphate reductoisomerase, C-terminal domain"/>
    <property type="match status" value="1"/>
</dbReference>
<dbReference type="SUPFAM" id="SSF55347">
    <property type="entry name" value="Glyceraldehyde-3-phosphate dehydrogenase-like, C-terminal domain"/>
    <property type="match status" value="1"/>
</dbReference>
<dbReference type="SUPFAM" id="SSF51735">
    <property type="entry name" value="NAD(P)-binding Rossmann-fold domains"/>
    <property type="match status" value="1"/>
</dbReference>
<accession>Q8KG43</accession>
<sequence>MKSLSILGSTGSIGLSTLDVVRRHPERFSIAALAEGHDVEMLLKQIDEFRPSLVSVRDEASRERLKGMLGDHKPEILCGLEGAAEVAAVDGADMVVSAIVGAAGLVPTVRAIEAGKDIALANKETLVVAGQLVSDLVKKHDVKLLPVDSEHSAIFQSLVGHRTEDIERIILTASGGPFRKTPAEELKNVGPEQALKHPQWSMGAKITIDSATLMNKGLEVIEAHWLFDMPAEKIGVVVHPQSIIHSMVEYIDGCVIAQLGVPDMRAPIAYALAWPERCETGIGKLDLTKVATLTFEEPDMERFPALRLAFDALKAGQTYPAVLNAANEIAVAAFLDKKIGFTDIAGTVDKTMQAHEAWTPITLEEYLQADKWARETARQLIG</sequence>
<keyword id="KW-0414">Isoprene biosynthesis</keyword>
<keyword id="KW-0464">Manganese</keyword>
<keyword id="KW-0479">Metal-binding</keyword>
<keyword id="KW-0521">NADP</keyword>
<keyword id="KW-0560">Oxidoreductase</keyword>
<keyword id="KW-1185">Reference proteome</keyword>
<feature type="chain" id="PRO_0000163634" description="1-deoxy-D-xylulose 5-phosphate reductoisomerase">
    <location>
        <begin position="1"/>
        <end position="382"/>
    </location>
</feature>
<feature type="binding site" evidence="1">
    <location>
        <position position="10"/>
    </location>
    <ligand>
        <name>NADPH</name>
        <dbReference type="ChEBI" id="CHEBI:57783"/>
    </ligand>
</feature>
<feature type="binding site" evidence="1">
    <location>
        <position position="11"/>
    </location>
    <ligand>
        <name>NADPH</name>
        <dbReference type="ChEBI" id="CHEBI:57783"/>
    </ligand>
</feature>
<feature type="binding site" evidence="1">
    <location>
        <position position="12"/>
    </location>
    <ligand>
        <name>NADPH</name>
        <dbReference type="ChEBI" id="CHEBI:57783"/>
    </ligand>
</feature>
<feature type="binding site" evidence="1">
    <location>
        <position position="13"/>
    </location>
    <ligand>
        <name>NADPH</name>
        <dbReference type="ChEBI" id="CHEBI:57783"/>
    </ligand>
</feature>
<feature type="binding site" evidence="1">
    <location>
        <position position="36"/>
    </location>
    <ligand>
        <name>NADPH</name>
        <dbReference type="ChEBI" id="CHEBI:57783"/>
    </ligand>
</feature>
<feature type="binding site" evidence="1">
    <location>
        <position position="122"/>
    </location>
    <ligand>
        <name>NADPH</name>
        <dbReference type="ChEBI" id="CHEBI:57783"/>
    </ligand>
</feature>
<feature type="binding site" evidence="1">
    <location>
        <position position="123"/>
    </location>
    <ligand>
        <name>1-deoxy-D-xylulose 5-phosphate</name>
        <dbReference type="ChEBI" id="CHEBI:57792"/>
    </ligand>
</feature>
<feature type="binding site" evidence="1">
    <location>
        <position position="124"/>
    </location>
    <ligand>
        <name>NADPH</name>
        <dbReference type="ChEBI" id="CHEBI:57783"/>
    </ligand>
</feature>
<feature type="binding site" evidence="1">
    <location>
        <position position="148"/>
    </location>
    <ligand>
        <name>Mn(2+)</name>
        <dbReference type="ChEBI" id="CHEBI:29035"/>
    </ligand>
</feature>
<feature type="binding site" evidence="1">
    <location>
        <position position="149"/>
    </location>
    <ligand>
        <name>1-deoxy-D-xylulose 5-phosphate</name>
        <dbReference type="ChEBI" id="CHEBI:57792"/>
    </ligand>
</feature>
<feature type="binding site" evidence="1">
    <location>
        <position position="150"/>
    </location>
    <ligand>
        <name>1-deoxy-D-xylulose 5-phosphate</name>
        <dbReference type="ChEBI" id="CHEBI:57792"/>
    </ligand>
</feature>
<feature type="binding site" evidence="1">
    <location>
        <position position="150"/>
    </location>
    <ligand>
        <name>Mn(2+)</name>
        <dbReference type="ChEBI" id="CHEBI:29035"/>
    </ligand>
</feature>
<feature type="binding site" evidence="1">
    <location>
        <position position="174"/>
    </location>
    <ligand>
        <name>1-deoxy-D-xylulose 5-phosphate</name>
        <dbReference type="ChEBI" id="CHEBI:57792"/>
    </ligand>
</feature>
<feature type="binding site" evidence="1">
    <location>
        <position position="197"/>
    </location>
    <ligand>
        <name>1-deoxy-D-xylulose 5-phosphate</name>
        <dbReference type="ChEBI" id="CHEBI:57792"/>
    </ligand>
</feature>
<feature type="binding site" evidence="1">
    <location>
        <position position="203"/>
    </location>
    <ligand>
        <name>NADPH</name>
        <dbReference type="ChEBI" id="CHEBI:57783"/>
    </ligand>
</feature>
<feature type="binding site" evidence="1">
    <location>
        <position position="210"/>
    </location>
    <ligand>
        <name>1-deoxy-D-xylulose 5-phosphate</name>
        <dbReference type="ChEBI" id="CHEBI:57792"/>
    </ligand>
</feature>
<feature type="binding site" evidence="1">
    <location>
        <position position="215"/>
    </location>
    <ligand>
        <name>1-deoxy-D-xylulose 5-phosphate</name>
        <dbReference type="ChEBI" id="CHEBI:57792"/>
    </ligand>
</feature>
<feature type="binding site" evidence="1">
    <location>
        <position position="216"/>
    </location>
    <ligand>
        <name>1-deoxy-D-xylulose 5-phosphate</name>
        <dbReference type="ChEBI" id="CHEBI:57792"/>
    </ligand>
</feature>
<feature type="binding site" evidence="1">
    <location>
        <position position="219"/>
    </location>
    <ligand>
        <name>1-deoxy-D-xylulose 5-phosphate</name>
        <dbReference type="ChEBI" id="CHEBI:57792"/>
    </ligand>
</feature>
<feature type="binding site" evidence="1">
    <location>
        <position position="219"/>
    </location>
    <ligand>
        <name>Mn(2+)</name>
        <dbReference type="ChEBI" id="CHEBI:29035"/>
    </ligand>
</feature>
<gene>
    <name evidence="1" type="primary">dxr</name>
    <name type="ordered locus">CT0125</name>
</gene>
<comment type="function">
    <text evidence="1">Catalyzes the NADPH-dependent rearrangement and reduction of 1-deoxy-D-xylulose-5-phosphate (DXP) to 2-C-methyl-D-erythritol 4-phosphate (MEP).</text>
</comment>
<comment type="catalytic activity">
    <reaction evidence="1">
        <text>2-C-methyl-D-erythritol 4-phosphate + NADP(+) = 1-deoxy-D-xylulose 5-phosphate + NADPH + H(+)</text>
        <dbReference type="Rhea" id="RHEA:13717"/>
        <dbReference type="ChEBI" id="CHEBI:15378"/>
        <dbReference type="ChEBI" id="CHEBI:57783"/>
        <dbReference type="ChEBI" id="CHEBI:57792"/>
        <dbReference type="ChEBI" id="CHEBI:58262"/>
        <dbReference type="ChEBI" id="CHEBI:58349"/>
        <dbReference type="EC" id="1.1.1.267"/>
    </reaction>
    <physiologicalReaction direction="right-to-left" evidence="1">
        <dbReference type="Rhea" id="RHEA:13719"/>
    </physiologicalReaction>
</comment>
<comment type="cofactor">
    <cofactor evidence="1">
        <name>Mg(2+)</name>
        <dbReference type="ChEBI" id="CHEBI:18420"/>
    </cofactor>
    <cofactor evidence="1">
        <name>Mn(2+)</name>
        <dbReference type="ChEBI" id="CHEBI:29035"/>
    </cofactor>
</comment>
<comment type="pathway">
    <text evidence="1">Isoprenoid biosynthesis; isopentenyl diphosphate biosynthesis via DXP pathway; isopentenyl diphosphate from 1-deoxy-D-xylulose 5-phosphate: step 1/6.</text>
</comment>
<comment type="similarity">
    <text evidence="1">Belongs to the DXR family.</text>
</comment>
<name>DXR_CHLTE</name>